<feature type="chain" id="PRO_0000379373" description="ATP-dependent helicase/deoxyribonuclease subunit B">
    <location>
        <begin position="1"/>
        <end position="1160"/>
    </location>
</feature>
<proteinExistence type="inferred from homology"/>
<dbReference type="EC" id="3.1.-.-" evidence="1"/>
<dbReference type="EMBL" id="CP000517">
    <property type="protein sequence ID" value="ABX27288.1"/>
    <property type="molecule type" value="Genomic_DNA"/>
</dbReference>
<dbReference type="RefSeq" id="WP_012211954.1">
    <property type="nucleotide sequence ID" value="NC_010080.1"/>
</dbReference>
<dbReference type="SMR" id="A8YVK1"/>
<dbReference type="KEGG" id="lhe:lhv_1274"/>
<dbReference type="eggNOG" id="COG3857">
    <property type="taxonomic scope" value="Bacteria"/>
</dbReference>
<dbReference type="HOGENOM" id="CLU_007838_0_0_9"/>
<dbReference type="Proteomes" id="UP000000790">
    <property type="component" value="Chromosome"/>
</dbReference>
<dbReference type="GO" id="GO:0008409">
    <property type="term" value="F:5'-3' exonuclease activity"/>
    <property type="evidence" value="ECO:0007669"/>
    <property type="project" value="UniProtKB-UniRule"/>
</dbReference>
<dbReference type="GO" id="GO:0005524">
    <property type="term" value="F:ATP binding"/>
    <property type="evidence" value="ECO:0007669"/>
    <property type="project" value="UniProtKB-UniRule"/>
</dbReference>
<dbReference type="GO" id="GO:0003690">
    <property type="term" value="F:double-stranded DNA binding"/>
    <property type="evidence" value="ECO:0007669"/>
    <property type="project" value="UniProtKB-UniRule"/>
</dbReference>
<dbReference type="GO" id="GO:0004386">
    <property type="term" value="F:helicase activity"/>
    <property type="evidence" value="ECO:0007669"/>
    <property type="project" value="UniProtKB-KW"/>
</dbReference>
<dbReference type="GO" id="GO:0016817">
    <property type="term" value="F:hydrolase activity, acting on acid anhydrides"/>
    <property type="evidence" value="ECO:0007669"/>
    <property type="project" value="InterPro"/>
</dbReference>
<dbReference type="GO" id="GO:0000724">
    <property type="term" value="P:double-strand break repair via homologous recombination"/>
    <property type="evidence" value="ECO:0007669"/>
    <property type="project" value="UniProtKB-UniRule"/>
</dbReference>
<dbReference type="Gene3D" id="3.40.50.300">
    <property type="entry name" value="P-loop containing nucleotide triphosphate hydrolases"/>
    <property type="match status" value="3"/>
</dbReference>
<dbReference type="HAMAP" id="MF_01453">
    <property type="entry name" value="AddB_type2"/>
    <property type="match status" value="1"/>
</dbReference>
<dbReference type="InterPro" id="IPR049035">
    <property type="entry name" value="ADDB_N"/>
</dbReference>
<dbReference type="InterPro" id="IPR014141">
    <property type="entry name" value="DNA_helicase_suRexB"/>
</dbReference>
<dbReference type="InterPro" id="IPR027417">
    <property type="entry name" value="P-loop_NTPase"/>
</dbReference>
<dbReference type="InterPro" id="IPR038726">
    <property type="entry name" value="PDDEXK_AddAB-type"/>
</dbReference>
<dbReference type="PANTHER" id="PTHR30591">
    <property type="entry name" value="RECBCD ENZYME SUBUNIT RECC"/>
    <property type="match status" value="1"/>
</dbReference>
<dbReference type="PANTHER" id="PTHR30591:SF1">
    <property type="entry name" value="RECBCD ENZYME SUBUNIT RECC"/>
    <property type="match status" value="1"/>
</dbReference>
<dbReference type="Pfam" id="PF21445">
    <property type="entry name" value="ADDB_N"/>
    <property type="match status" value="1"/>
</dbReference>
<dbReference type="Pfam" id="PF12705">
    <property type="entry name" value="PDDEXK_1"/>
    <property type="match status" value="1"/>
</dbReference>
<dbReference type="SUPFAM" id="SSF52540">
    <property type="entry name" value="P-loop containing nucleoside triphosphate hydrolases"/>
    <property type="match status" value="1"/>
</dbReference>
<reference key="1">
    <citation type="journal article" date="2008" name="J. Bacteriol.">
        <title>Genome sequence of Lactobacillus helveticus: an organism distinguished by selective gene loss and IS element expansion.</title>
        <authorList>
            <person name="Callanan M."/>
            <person name="Kaleta P."/>
            <person name="O'Callaghan J."/>
            <person name="O'Sullivan O."/>
            <person name="Jordan K."/>
            <person name="McAuliffe O."/>
            <person name="Sangrador-Vegas A."/>
            <person name="Slattery L."/>
            <person name="Fitzgerald G.F."/>
            <person name="Beresford T."/>
            <person name="Ross R.P."/>
        </authorList>
    </citation>
    <scope>NUCLEOTIDE SEQUENCE [LARGE SCALE GENOMIC DNA]</scope>
    <source>
        <strain>DPC 4571</strain>
    </source>
</reference>
<sequence length="1160" mass="134065">MIKIITGRQTDPLQEKILATAIENYQQHPENETFIIVPNHIKFTTEVRAINKLASSKKQTETAVKNLHVLSFSRLAWFFLKDAEQGLPTQLDDAASAMLLTHIIEQKQDELIIFEQSNSGMVRQLYNTILQVYDGNLDLDNIDETNLDQETKSKIHDLRIIYDAFIEEIAGKFSTKNEVQVQLNDILAKNSELKNASFYFCDFSHFSLQEMLTIQILMRKAKNVTLAFKTRLGNINPKAEAGDYDYVIQQTIRRLVSFLQERDMDYVASEFPIPSEPTPREILNSLWTETVSKVDELKQVQLVKADSRYAEAYFVARTIYQQVALNNYRYRDFLILAPDLKEYETYLTPILRQNNIPFFNDLQQEMKYHPLVVLIENLFNLRDLKENPFQTQSMLAILKTHLLIPSWYKEEAEYIHDVDELENFVLAHGINHNLWKKHFADFVSAEVIRLDKIDEEVAKIDRLRGYLVDKVTNLFTKLEQEKDSQKALTIFFDFLTKNGIAERLEQWRDAANNAGDLQQAQQPEQLWDLLIQLLKDYLAINPEKFDLDEFFNMLISAFKEATFSQIPSTLDAVNLSEMGMVQTSGYKQVFIIGATSGNLPSIEKKPGFLTTENLNQLQSSFESDAYLEDNQRLNNLDQNYQFGLSLALAQDRVYISYPVLNASNEKLDPSIYYQRLQDYGAPEFSQHDLPEKMQELLSFITNPDASLGYLAYINSNTSDEAIDELLKITQKYLPQKVKAVLDASDFDNQPEDIGEDLAAELYGKNLYSSVSQLETFYENSYEYFLTYGLKLRRRLENEFDVIQAGNYFHETFDRLVKRLNEQHIDLADLSSVELEQQLNQVRDVIKDESKYAQLMNDPFNQYLFHCLDHTTSKVAQNWRKSLAETPLRAKYSELSFGLDQKIKGISLDIPDLPGNHQVNLRGKIDRVDLANFAEKDQVLAQVIDYKSSAKKFDLGMFYNGIALQMISYLDVLTNNNRFFAEEDKLSLLGAFYQTVTRQLERLNSNKLIDSSLNLRENAIDSKPKLMYTGLISNNPEILLEAEPLLDGKSSQASQLYTGVGTKARGGFKLPADRNFSEEEFQLLLEYDEYLIKEASRQILSGQIKLNPYRYGRSKNALTYSDFKDIFFFDAMLRHNQYHEISNMSKKDLLVKIKEKLGKKD</sequence>
<name>ADDB_LACH4</name>
<comment type="function">
    <text evidence="1">The heterodimer acts as both an ATP-dependent DNA helicase and an ATP-dependent, dual-direction single-stranded exonuclease. Recognizes the chi site generating a DNA molecule suitable for the initiation of homologous recombination. This subunit has 5' -&gt; 3' nuclease activity but not helicase activity.</text>
</comment>
<comment type="cofactor">
    <cofactor evidence="1">
        <name>Mg(2+)</name>
        <dbReference type="ChEBI" id="CHEBI:18420"/>
    </cofactor>
</comment>
<comment type="subunit">
    <text evidence="1">Heterodimer of AddA and RexB.</text>
</comment>
<comment type="miscellaneous">
    <text evidence="1">Despite having helicase-like domains, this subunit does not have helicase activity.</text>
</comment>
<comment type="similarity">
    <text evidence="1">Belongs to the helicase family. AddB/RexB type 2 subfamily.</text>
</comment>
<organism>
    <name type="scientific">Lactobacillus helveticus (strain DPC 4571)</name>
    <dbReference type="NCBI Taxonomy" id="405566"/>
    <lineage>
        <taxon>Bacteria</taxon>
        <taxon>Bacillati</taxon>
        <taxon>Bacillota</taxon>
        <taxon>Bacilli</taxon>
        <taxon>Lactobacillales</taxon>
        <taxon>Lactobacillaceae</taxon>
        <taxon>Lactobacillus</taxon>
    </lineage>
</organism>
<keyword id="KW-0067">ATP-binding</keyword>
<keyword id="KW-0227">DNA damage</keyword>
<keyword id="KW-0234">DNA repair</keyword>
<keyword id="KW-0238">DNA-binding</keyword>
<keyword id="KW-0269">Exonuclease</keyword>
<keyword id="KW-0347">Helicase</keyword>
<keyword id="KW-0378">Hydrolase</keyword>
<keyword id="KW-0540">Nuclease</keyword>
<keyword id="KW-0547">Nucleotide-binding</keyword>
<gene>
    <name evidence="1" type="primary">rexB</name>
    <name type="ordered locus">lhv_1274</name>
</gene>
<evidence type="ECO:0000255" key="1">
    <source>
        <dbReference type="HAMAP-Rule" id="MF_01453"/>
    </source>
</evidence>
<accession>A8YVK1</accession>
<protein>
    <recommendedName>
        <fullName evidence="1">ATP-dependent helicase/deoxyribonuclease subunit B</fullName>
        <ecNumber evidence="1">3.1.-.-</ecNumber>
    </recommendedName>
    <alternativeName>
        <fullName evidence="1">ATP-dependent helicase/nuclease subunit RexB</fullName>
    </alternativeName>
</protein>